<organism>
    <name type="scientific">Nicotiana sylvestris</name>
    <name type="common">Wood tobacco</name>
    <name type="synonym">South American tobacco</name>
    <dbReference type="NCBI Taxonomy" id="4096"/>
    <lineage>
        <taxon>Eukaryota</taxon>
        <taxon>Viridiplantae</taxon>
        <taxon>Streptophyta</taxon>
        <taxon>Embryophyta</taxon>
        <taxon>Tracheophyta</taxon>
        <taxon>Spermatophyta</taxon>
        <taxon>Magnoliopsida</taxon>
        <taxon>eudicotyledons</taxon>
        <taxon>Gunneridae</taxon>
        <taxon>Pentapetalae</taxon>
        <taxon>asterids</taxon>
        <taxon>lamiids</taxon>
        <taxon>Solanales</taxon>
        <taxon>Solanaceae</taxon>
        <taxon>Nicotianoideae</taxon>
        <taxon>Nicotianeae</taxon>
        <taxon>Nicotiana</taxon>
    </lineage>
</organism>
<dbReference type="EMBL" id="X61114">
    <property type="protein sequence ID" value="CAA43428.1"/>
    <property type="molecule type" value="mRNA"/>
</dbReference>
<dbReference type="PIR" id="S20070">
    <property type="entry name" value="S20070"/>
</dbReference>
<dbReference type="SMR" id="Q08937"/>
<dbReference type="STRING" id="4096.Q08937"/>
<dbReference type="eggNOG" id="KOG0118">
    <property type="taxonomic scope" value="Eukaryota"/>
</dbReference>
<dbReference type="Proteomes" id="UP000189701">
    <property type="component" value="Unplaced"/>
</dbReference>
<dbReference type="GO" id="GO:0009535">
    <property type="term" value="C:chloroplast thylakoid membrane"/>
    <property type="evidence" value="ECO:0007669"/>
    <property type="project" value="TreeGrafter"/>
</dbReference>
<dbReference type="GO" id="GO:1990904">
    <property type="term" value="C:ribonucleoprotein complex"/>
    <property type="evidence" value="ECO:0007669"/>
    <property type="project" value="UniProtKB-KW"/>
</dbReference>
<dbReference type="GO" id="GO:0003729">
    <property type="term" value="F:mRNA binding"/>
    <property type="evidence" value="ECO:0007669"/>
    <property type="project" value="TreeGrafter"/>
</dbReference>
<dbReference type="GO" id="GO:1901259">
    <property type="term" value="P:chloroplast rRNA processing"/>
    <property type="evidence" value="ECO:0007669"/>
    <property type="project" value="TreeGrafter"/>
</dbReference>
<dbReference type="GO" id="GO:0006397">
    <property type="term" value="P:mRNA processing"/>
    <property type="evidence" value="ECO:0007669"/>
    <property type="project" value="UniProtKB-KW"/>
</dbReference>
<dbReference type="CDD" id="cd21608">
    <property type="entry name" value="RRM2_NsCP33_like"/>
    <property type="match status" value="1"/>
</dbReference>
<dbReference type="FunFam" id="3.30.70.330:FF:000361">
    <property type="entry name" value="28 kDa ribonucleoprotein, chloroplastic"/>
    <property type="match status" value="1"/>
</dbReference>
<dbReference type="Gene3D" id="3.30.70.330">
    <property type="match status" value="2"/>
</dbReference>
<dbReference type="InterPro" id="IPR050502">
    <property type="entry name" value="Euk_RNA-bind_prot"/>
</dbReference>
<dbReference type="InterPro" id="IPR012677">
    <property type="entry name" value="Nucleotide-bd_a/b_plait_sf"/>
</dbReference>
<dbReference type="InterPro" id="IPR035979">
    <property type="entry name" value="RBD_domain_sf"/>
</dbReference>
<dbReference type="InterPro" id="IPR048289">
    <property type="entry name" value="RRM2_NsCP33-like"/>
</dbReference>
<dbReference type="InterPro" id="IPR000504">
    <property type="entry name" value="RRM_dom"/>
</dbReference>
<dbReference type="PANTHER" id="PTHR48025">
    <property type="entry name" value="OS02G0815200 PROTEIN"/>
    <property type="match status" value="1"/>
</dbReference>
<dbReference type="PANTHER" id="PTHR48025:SF1">
    <property type="entry name" value="RRM DOMAIN-CONTAINING PROTEIN"/>
    <property type="match status" value="1"/>
</dbReference>
<dbReference type="Pfam" id="PF00076">
    <property type="entry name" value="RRM_1"/>
    <property type="match status" value="2"/>
</dbReference>
<dbReference type="SMART" id="SM00360">
    <property type="entry name" value="RRM"/>
    <property type="match status" value="2"/>
</dbReference>
<dbReference type="SUPFAM" id="SSF54928">
    <property type="entry name" value="RNA-binding domain, RBD"/>
    <property type="match status" value="2"/>
</dbReference>
<dbReference type="PROSITE" id="PS50102">
    <property type="entry name" value="RRM"/>
    <property type="match status" value="2"/>
</dbReference>
<keyword id="KW-0150">Chloroplast</keyword>
<keyword id="KW-0507">mRNA processing</keyword>
<keyword id="KW-0934">Plastid</keyword>
<keyword id="KW-1185">Reference proteome</keyword>
<keyword id="KW-0677">Repeat</keyword>
<keyword id="KW-0687">Ribonucleoprotein</keyword>
<keyword id="KW-0694">RNA-binding</keyword>
<keyword id="KW-0809">Transit peptide</keyword>
<sequence>MASSSVSSLQFLFVTPQTPSSLKPNSTLSFFSLPSSSLNLSLSSSSTGLCSIKPFESSFSTRVALSGFDQLEDDVEVAEQPRFSEDLKLFVGNLPFSVDSAALAGLFERAGNVEMVEVIYDKLTGRSRGFGFVTMSTKEEVEAAEQQFNGYEIDGRAIRVNAGPAPAKRENSSFGGGRGGNSSYGGGRDGNSSFGGARGGRSVDSSNRVYVGNLSWGVDDLALKELFSEQGNVVDAKVVYDRDSGRSRGFGFVTYSSSKEVNDAIDSLNGVDLDGRSIRVSAAEERPRRQF</sequence>
<protein>
    <recommendedName>
        <fullName>29 kDa ribonucleoprotein B, chloroplastic</fullName>
    </recommendedName>
    <alternativeName>
        <fullName>CP29B</fullName>
    </alternativeName>
</protein>
<accession>Q08937</accession>
<comment type="function">
    <text>Could be involved in splicing and/or processing of chloroplast RNA's.</text>
</comment>
<comment type="subcellular location">
    <subcellularLocation>
        <location>Plastid</location>
        <location>Chloroplast</location>
    </subcellularLocation>
</comment>
<evidence type="ECO:0000255" key="1"/>
<evidence type="ECO:0000255" key="2">
    <source>
        <dbReference type="PROSITE-ProRule" id="PRU00176"/>
    </source>
</evidence>
<evidence type="ECO:0000256" key="3">
    <source>
        <dbReference type="SAM" id="MobiDB-lite"/>
    </source>
</evidence>
<feature type="transit peptide" description="Chloroplast" evidence="1">
    <location>
        <begin position="1"/>
        <end status="unknown"/>
    </location>
</feature>
<feature type="chain" id="PRO_0000031027" description="29 kDa ribonucleoprotein B, chloroplastic">
    <location>
        <begin status="unknown"/>
        <end position="291"/>
    </location>
</feature>
<feature type="domain" description="RRM 1" evidence="2">
    <location>
        <begin position="87"/>
        <end position="165"/>
    </location>
</feature>
<feature type="domain" description="RRM 2" evidence="2">
    <location>
        <begin position="207"/>
        <end position="285"/>
    </location>
</feature>
<feature type="region of interest" description="Disordered" evidence="3">
    <location>
        <begin position="164"/>
        <end position="202"/>
    </location>
</feature>
<feature type="region of interest" description="Linker (Gly-rich)">
    <location>
        <begin position="166"/>
        <end position="206"/>
    </location>
</feature>
<feature type="compositionally biased region" description="Gly residues" evidence="3">
    <location>
        <begin position="174"/>
        <end position="189"/>
    </location>
</feature>
<proteinExistence type="evidence at transcript level"/>
<name>ROC2_NICSY</name>
<reference key="1">
    <citation type="journal article" date="1991" name="Nucleic Acids Res.">
        <title>Diversity of a ribonucleoprotein family in tobacco chloroplasts: two new chloroplast ribonucleoproteins and a phylogenetic tree of ten chloroplast RNA-binding domains.</title>
        <authorList>
            <person name="Ye L."/>
            <person name="Li Y."/>
            <person name="Fukami-Kobayashi F."/>
            <person name="Go M."/>
            <person name="Konishi T."/>
            <person name="Watanbe A."/>
            <person name="Sugiura M."/>
        </authorList>
    </citation>
    <scope>NUCLEOTIDE SEQUENCE [MRNA]</scope>
    <source>
        <tissue>Leaf</tissue>
    </source>
</reference>